<proteinExistence type="evidence at protein level"/>
<feature type="chain" id="PRO_0000274812" description="Myosin regulatory light chain 2">
    <location>
        <begin position="1"/>
        <end position="201"/>
    </location>
</feature>
<feature type="domain" description="EF-hand 1" evidence="4">
    <location>
        <begin position="55"/>
        <end position="90"/>
    </location>
</feature>
<feature type="domain" description="EF-hand 2" evidence="4">
    <location>
        <begin position="125"/>
        <end position="158"/>
    </location>
</feature>
<feature type="domain" description="EF-hand 3" evidence="4">
    <location>
        <begin position="159"/>
        <end position="194"/>
    </location>
</feature>
<feature type="region of interest" description="Disordered" evidence="5">
    <location>
        <begin position="1"/>
        <end position="48"/>
    </location>
</feature>
<feature type="compositionally biased region" description="Low complexity" evidence="5">
    <location>
        <begin position="20"/>
        <end position="29"/>
    </location>
</feature>
<feature type="binding site" evidence="4">
    <location>
        <position position="68"/>
    </location>
    <ligand>
        <name>Ca(2+)</name>
        <dbReference type="ChEBI" id="CHEBI:29108"/>
    </ligand>
</feature>
<feature type="binding site" evidence="4">
    <location>
        <position position="70"/>
    </location>
    <ligand>
        <name>Ca(2+)</name>
        <dbReference type="ChEBI" id="CHEBI:29108"/>
    </ligand>
</feature>
<feature type="binding site" evidence="4">
    <location>
        <position position="72"/>
    </location>
    <ligand>
        <name>Ca(2+)</name>
        <dbReference type="ChEBI" id="CHEBI:29108"/>
    </ligand>
</feature>
<feature type="binding site" evidence="4">
    <location>
        <position position="79"/>
    </location>
    <ligand>
        <name>Ca(2+)</name>
        <dbReference type="ChEBI" id="CHEBI:29108"/>
    </ligand>
</feature>
<feature type="modified residue" description="Phosphoserine" evidence="3">
    <location>
        <position position="46"/>
    </location>
</feature>
<feature type="sequence conflict" description="In Ref. 2; AA sequence." evidence="7" ref="2">
    <original>H</original>
    <variation>A</variation>
    <location>
        <position position="69"/>
    </location>
</feature>
<keyword id="KW-0106">Calcium</keyword>
<keyword id="KW-0903">Direct protein sequencing</keyword>
<keyword id="KW-0479">Metal-binding</keyword>
<keyword id="KW-0505">Motor protein</keyword>
<keyword id="KW-0514">Muscle protein</keyword>
<keyword id="KW-0518">Myosin</keyword>
<keyword id="KW-0597">Phosphoprotein</keyword>
<keyword id="KW-1185">Reference proteome</keyword>
<keyword id="KW-0677">Repeat</keyword>
<organism>
    <name type="scientific">Bombyx mori</name>
    <name type="common">Silk moth</name>
    <dbReference type="NCBI Taxonomy" id="7091"/>
    <lineage>
        <taxon>Eukaryota</taxon>
        <taxon>Metazoa</taxon>
        <taxon>Ecdysozoa</taxon>
        <taxon>Arthropoda</taxon>
        <taxon>Hexapoda</taxon>
        <taxon>Insecta</taxon>
        <taxon>Pterygota</taxon>
        <taxon>Neoptera</taxon>
        <taxon>Endopterygota</taxon>
        <taxon>Lepidoptera</taxon>
        <taxon>Glossata</taxon>
        <taxon>Ditrysia</taxon>
        <taxon>Bombycoidea</taxon>
        <taxon>Bombycidae</taxon>
        <taxon>Bombycinae</taxon>
        <taxon>Bombyx</taxon>
    </lineage>
</organism>
<evidence type="ECO:0000250" key="1"/>
<evidence type="ECO:0000250" key="2">
    <source>
        <dbReference type="UniProtKB" id="P02610"/>
    </source>
</evidence>
<evidence type="ECO:0000250" key="3">
    <source>
        <dbReference type="UniProtKB" id="P24844"/>
    </source>
</evidence>
<evidence type="ECO:0000255" key="4">
    <source>
        <dbReference type="PROSITE-ProRule" id="PRU00448"/>
    </source>
</evidence>
<evidence type="ECO:0000256" key="5">
    <source>
        <dbReference type="SAM" id="MobiDB-lite"/>
    </source>
</evidence>
<evidence type="ECO:0000269" key="6">
    <source>
    </source>
</evidence>
<evidence type="ECO:0000305" key="7"/>
<evidence type="ECO:0000312" key="8">
    <source>
        <dbReference type="EMBL" id="ABF51421.1"/>
    </source>
</evidence>
<sequence>MADKDKKVKKKKAKEDAPAEEAPAAAAPAGDRQSSRGSRKAKRTGSNVFSMFSQKQVAEFKEAFQLMDHDKDGIIGKNDLRATFDSLGRLASEKELDEMVGEASGPINFTQLLTLFANRMSGGSDEDDVVINAFKTFDEEGKIDSERLRHALMTWGDKFSADEVDEAYDQMDIDDKGYIDTTKLIAMLTASAEEEEGGEAA</sequence>
<reference evidence="8" key="1">
    <citation type="submission" date="2006-03" db="EMBL/GenBank/DDBJ databases">
        <title>Blast silkworm EST database for functional genes.</title>
        <authorList>
            <person name="Niu B.L."/>
            <person name="Meng Z.Q."/>
            <person name="Weng H.B."/>
            <person name="Shen W.F."/>
            <person name="He L.H."/>
            <person name="Zheng K.F."/>
            <person name="Ye S.T."/>
            <person name="Lin T.B."/>
            <person name="Chen J.E."/>
        </authorList>
    </citation>
    <scope>NUCLEOTIDE SEQUENCE [LARGE SCALE MRNA]</scope>
</reference>
<reference evidence="7" key="2">
    <citation type="journal article" date="2001" name="Yi Chuan Xue Bao">
        <title>Protein database for several tissues derived from five instar of silkworm.</title>
        <authorList>
            <person name="Zhong B.-X."/>
        </authorList>
    </citation>
    <scope>PROTEIN SEQUENCE OF 45-74 AND 77-96</scope>
    <source>
        <strain evidence="6">Xinhang X Keming</strain>
        <tissue evidence="6">Body wall</tissue>
        <tissue evidence="6">Fat body</tissue>
    </source>
</reference>
<accession>Q1HPS0</accession>
<accession>P82214</accession>
<accession>P82215</accession>
<dbReference type="EMBL" id="DQ443332">
    <property type="protein sequence ID" value="ABF51421.1"/>
    <property type="molecule type" value="mRNA"/>
</dbReference>
<dbReference type="RefSeq" id="NP_001091813.1">
    <property type="nucleotide sequence ID" value="NM_001098343.1"/>
</dbReference>
<dbReference type="SMR" id="Q1HPS0"/>
<dbReference type="FunCoup" id="Q1HPS0">
    <property type="interactions" value="10"/>
</dbReference>
<dbReference type="STRING" id="7091.Q1HPS0"/>
<dbReference type="PaxDb" id="7091-BGIBMGA002259-TA"/>
<dbReference type="EnsemblMetazoa" id="NM_001098343.1">
    <property type="protein sequence ID" value="NP_001091813.1"/>
    <property type="gene ID" value="GeneID_778518"/>
</dbReference>
<dbReference type="GeneID" id="778518"/>
<dbReference type="KEGG" id="bmor:778518"/>
<dbReference type="CTD" id="43587"/>
<dbReference type="eggNOG" id="KOG0031">
    <property type="taxonomic scope" value="Eukaryota"/>
</dbReference>
<dbReference type="HOGENOM" id="CLU_061288_9_1_1"/>
<dbReference type="InParanoid" id="Q1HPS0"/>
<dbReference type="OrthoDB" id="481172at7088"/>
<dbReference type="Proteomes" id="UP000005204">
    <property type="component" value="Unassembled WGS sequence"/>
</dbReference>
<dbReference type="GO" id="GO:0016459">
    <property type="term" value="C:myosin complex"/>
    <property type="evidence" value="ECO:0007669"/>
    <property type="project" value="UniProtKB-KW"/>
</dbReference>
<dbReference type="GO" id="GO:0005509">
    <property type="term" value="F:calcium ion binding"/>
    <property type="evidence" value="ECO:0007669"/>
    <property type="project" value="InterPro"/>
</dbReference>
<dbReference type="FunFam" id="1.10.238.10:FF:000007">
    <property type="entry name" value="Putative myosin regulatory light chain sqh"/>
    <property type="match status" value="1"/>
</dbReference>
<dbReference type="Gene3D" id="1.10.238.10">
    <property type="entry name" value="EF-hand"/>
    <property type="match status" value="2"/>
</dbReference>
<dbReference type="InterPro" id="IPR011992">
    <property type="entry name" value="EF-hand-dom_pair"/>
</dbReference>
<dbReference type="InterPro" id="IPR018247">
    <property type="entry name" value="EF_Hand_1_Ca_BS"/>
</dbReference>
<dbReference type="InterPro" id="IPR002048">
    <property type="entry name" value="EF_hand_dom"/>
</dbReference>
<dbReference type="InterPro" id="IPR050403">
    <property type="entry name" value="Myosin_RLC"/>
</dbReference>
<dbReference type="PANTHER" id="PTHR23049">
    <property type="entry name" value="MYOSIN REGULATORY LIGHT CHAIN 2"/>
    <property type="match status" value="1"/>
</dbReference>
<dbReference type="Pfam" id="PF13405">
    <property type="entry name" value="EF-hand_6"/>
    <property type="match status" value="1"/>
</dbReference>
<dbReference type="SMART" id="SM00054">
    <property type="entry name" value="EFh"/>
    <property type="match status" value="2"/>
</dbReference>
<dbReference type="SUPFAM" id="SSF47473">
    <property type="entry name" value="EF-hand"/>
    <property type="match status" value="1"/>
</dbReference>
<dbReference type="PROSITE" id="PS00018">
    <property type="entry name" value="EF_HAND_1"/>
    <property type="match status" value="1"/>
</dbReference>
<dbReference type="PROSITE" id="PS50222">
    <property type="entry name" value="EF_HAND_2"/>
    <property type="match status" value="3"/>
</dbReference>
<comment type="subunit">
    <text evidence="1">Myosin is a hexamer of 2 heavy chains and 4 light chains.</text>
</comment>
<comment type="miscellaneous">
    <text evidence="2">This chain binds calcium.</text>
</comment>
<protein>
    <recommendedName>
        <fullName>Myosin regulatory light chain 2</fullName>
        <shortName>MLC-2</shortName>
    </recommendedName>
</protein>
<name>MLR_BOMMO</name>